<keyword id="KW-0007">Acetylation</keyword>
<keyword id="KW-0378">Hydrolase</keyword>
<keyword id="KW-0645">Protease</keyword>
<keyword id="KW-1185">Reference proteome</keyword>
<keyword id="KW-0788">Thiol protease</keyword>
<keyword id="KW-0833">Ubl conjugation pathway</keyword>
<sequence>MDPVVLSYMDSLLRQSDVSLLDPPNWLNDHIIGFAFEYFASSQFHDCSDHVCFISPEVTQFIKCTSSPAEIAMFLEPLDLPHKRVVFLAINDNSNQAAGGTHWSLLVYLQDKNSFFHYDSHSRSNSIHAKQVAEKLKAFLGSKGDKLVFVEEKAPAQQNSYDCGMYVICNTEALCQNLFRRQPESPLQLLTPTYITKKRGEWKDLIARLAKKNRSSY</sequence>
<accession>Q5FVJ8</accession>
<comment type="function">
    <text evidence="2">Protease that catalyzes two essential functions in the NEDD8 pathway: processing of full-length NEDD8 to its mature form and deconjugation of NEDD8 from targeted proteins such as cullins or p53.</text>
</comment>
<comment type="similarity">
    <text evidence="3">Belongs to the peptidase C48 family.</text>
</comment>
<proteinExistence type="evidence at transcript level"/>
<evidence type="ECO:0000250" key="1"/>
<evidence type="ECO:0000250" key="2">
    <source>
        <dbReference type="UniProtKB" id="Q96LD8"/>
    </source>
</evidence>
<evidence type="ECO:0000305" key="3"/>
<gene>
    <name type="primary">Senp8</name>
</gene>
<reference key="1">
    <citation type="journal article" date="2004" name="Genome Res.">
        <title>The status, quality, and expansion of the NIH full-length cDNA project: the Mammalian Gene Collection (MGC).</title>
        <authorList>
            <consortium name="The MGC Project Team"/>
        </authorList>
    </citation>
    <scope>NUCLEOTIDE SEQUENCE [LARGE SCALE MRNA]</scope>
    <source>
        <tissue>Ovary</tissue>
    </source>
</reference>
<dbReference type="EC" id="3.4.22.-"/>
<dbReference type="EMBL" id="BC089939">
    <property type="protein sequence ID" value="AAH89939.1"/>
    <property type="molecule type" value="mRNA"/>
</dbReference>
<dbReference type="RefSeq" id="NP_001012355.1">
    <property type="nucleotide sequence ID" value="NM_001012355.1"/>
</dbReference>
<dbReference type="SMR" id="Q5FVJ8"/>
<dbReference type="FunCoup" id="Q5FVJ8">
    <property type="interactions" value="550"/>
</dbReference>
<dbReference type="STRING" id="10116.ENSRNOP00000062239"/>
<dbReference type="PhosphoSitePlus" id="Q5FVJ8"/>
<dbReference type="PaxDb" id="10116-ENSRNOP00000062239"/>
<dbReference type="Ensembl" id="ENSRNOT00000015415.8">
    <property type="protein sequence ID" value="ENSRNOP00000062239.1"/>
    <property type="gene ID" value="ENSRNOG00000011595.8"/>
</dbReference>
<dbReference type="Ensembl" id="ENSRNOT00000095899.1">
    <property type="protein sequence ID" value="ENSRNOP00000086291.1"/>
    <property type="gene ID" value="ENSRNOG00000011595.8"/>
</dbReference>
<dbReference type="Ensembl" id="ENSRNOT00000111287.1">
    <property type="protein sequence ID" value="ENSRNOP00000086922.1"/>
    <property type="gene ID" value="ENSRNOG00000011595.8"/>
</dbReference>
<dbReference type="Ensembl" id="ENSRNOT00000117148.1">
    <property type="protein sequence ID" value="ENSRNOP00000093886.1"/>
    <property type="gene ID" value="ENSRNOG00000011595.8"/>
</dbReference>
<dbReference type="Ensembl" id="ENSRNOT00000117798.1">
    <property type="protein sequence ID" value="ENSRNOP00000076855.1"/>
    <property type="gene ID" value="ENSRNOG00000011595.8"/>
</dbReference>
<dbReference type="GeneID" id="315723"/>
<dbReference type="KEGG" id="rno:315723"/>
<dbReference type="UCSC" id="RGD:1309955">
    <property type="organism name" value="rat"/>
</dbReference>
<dbReference type="AGR" id="RGD:1309955"/>
<dbReference type="CTD" id="123228"/>
<dbReference type="RGD" id="1309955">
    <property type="gene designation" value="Senp8"/>
</dbReference>
<dbReference type="eggNOG" id="KOG3246">
    <property type="taxonomic scope" value="Eukaryota"/>
</dbReference>
<dbReference type="GeneTree" id="ENSGT00390000014038"/>
<dbReference type="HOGENOM" id="CLU_043678_3_1_1"/>
<dbReference type="InParanoid" id="Q5FVJ8"/>
<dbReference type="OMA" id="GFYFEYL"/>
<dbReference type="OrthoDB" id="5065855at2759"/>
<dbReference type="PhylomeDB" id="Q5FVJ8"/>
<dbReference type="TreeFam" id="TF351057"/>
<dbReference type="Reactome" id="R-RNO-5689603">
    <property type="pathway name" value="UCH proteinases"/>
</dbReference>
<dbReference type="Reactome" id="R-RNO-8951664">
    <property type="pathway name" value="Neddylation"/>
</dbReference>
<dbReference type="PRO" id="PR:Q5FVJ8"/>
<dbReference type="Proteomes" id="UP000002494">
    <property type="component" value="Chromosome 8"/>
</dbReference>
<dbReference type="Bgee" id="ENSRNOG00000011595">
    <property type="expression patterns" value="Expressed in skeletal muscle tissue and 19 other cell types or tissues"/>
</dbReference>
<dbReference type="GO" id="GO:0008234">
    <property type="term" value="F:cysteine-type peptidase activity"/>
    <property type="evidence" value="ECO:0007669"/>
    <property type="project" value="UniProtKB-KW"/>
</dbReference>
<dbReference type="GO" id="GO:0019784">
    <property type="term" value="F:deNEDDylase activity"/>
    <property type="evidence" value="ECO:0000318"/>
    <property type="project" value="GO_Central"/>
</dbReference>
<dbReference type="GO" id="GO:0000338">
    <property type="term" value="P:protein deneddylation"/>
    <property type="evidence" value="ECO:0000318"/>
    <property type="project" value="GO_Central"/>
</dbReference>
<dbReference type="GO" id="GO:0006508">
    <property type="term" value="P:proteolysis"/>
    <property type="evidence" value="ECO:0007669"/>
    <property type="project" value="UniProtKB-KW"/>
</dbReference>
<dbReference type="FunFam" id="3.40.395.10:FF:000003">
    <property type="entry name" value="Sentrin-specific protease 8"/>
    <property type="match status" value="1"/>
</dbReference>
<dbReference type="Gene3D" id="3.40.395.10">
    <property type="entry name" value="Adenoviral Proteinase, Chain A"/>
    <property type="match status" value="1"/>
</dbReference>
<dbReference type="InterPro" id="IPR044613">
    <property type="entry name" value="Nep1/2-like"/>
</dbReference>
<dbReference type="InterPro" id="IPR038765">
    <property type="entry name" value="Papain-like_cys_pep_sf"/>
</dbReference>
<dbReference type="InterPro" id="IPR003653">
    <property type="entry name" value="Peptidase_C48_C"/>
</dbReference>
<dbReference type="PANTHER" id="PTHR46468">
    <property type="entry name" value="SENTRIN-SPECIFIC PROTEASE 8"/>
    <property type="match status" value="1"/>
</dbReference>
<dbReference type="PANTHER" id="PTHR46468:SF1">
    <property type="entry name" value="SENTRIN-SPECIFIC PROTEASE 8"/>
    <property type="match status" value="1"/>
</dbReference>
<dbReference type="Pfam" id="PF02902">
    <property type="entry name" value="Peptidase_C48"/>
    <property type="match status" value="1"/>
</dbReference>
<dbReference type="SUPFAM" id="SSF54001">
    <property type="entry name" value="Cysteine proteinases"/>
    <property type="match status" value="1"/>
</dbReference>
<dbReference type="PROSITE" id="PS50600">
    <property type="entry name" value="ULP_PROTEASE"/>
    <property type="match status" value="1"/>
</dbReference>
<protein>
    <recommendedName>
        <fullName>Sentrin-specific protease 8</fullName>
        <ecNumber>3.4.22.-</ecNumber>
    </recommendedName>
    <alternativeName>
        <fullName>Deneddylase-1</fullName>
    </alternativeName>
    <alternativeName>
        <fullName>NEDD8-specific protease 1</fullName>
    </alternativeName>
    <alternativeName>
        <fullName>Sentrin/SUMO-specific protease SENP8</fullName>
    </alternativeName>
</protein>
<name>SENP8_RAT</name>
<feature type="chain" id="PRO_0000101729" description="Sentrin-specific protease 8">
    <location>
        <begin position="1"/>
        <end position="217"/>
    </location>
</feature>
<feature type="region of interest" description="Protease">
    <location>
        <begin position="11"/>
        <end position="174"/>
    </location>
</feature>
<feature type="active site" evidence="1">
    <location>
        <position position="102"/>
    </location>
</feature>
<feature type="active site" evidence="1">
    <location>
        <position position="119"/>
    </location>
</feature>
<feature type="active site" description="Nucleophile" evidence="1">
    <location>
        <position position="163"/>
    </location>
</feature>
<feature type="modified residue" description="N-acetylmethionine" evidence="2">
    <location>
        <position position="1"/>
    </location>
</feature>
<organism>
    <name type="scientific">Rattus norvegicus</name>
    <name type="common">Rat</name>
    <dbReference type="NCBI Taxonomy" id="10116"/>
    <lineage>
        <taxon>Eukaryota</taxon>
        <taxon>Metazoa</taxon>
        <taxon>Chordata</taxon>
        <taxon>Craniata</taxon>
        <taxon>Vertebrata</taxon>
        <taxon>Euteleostomi</taxon>
        <taxon>Mammalia</taxon>
        <taxon>Eutheria</taxon>
        <taxon>Euarchontoglires</taxon>
        <taxon>Glires</taxon>
        <taxon>Rodentia</taxon>
        <taxon>Myomorpha</taxon>
        <taxon>Muroidea</taxon>
        <taxon>Muridae</taxon>
        <taxon>Murinae</taxon>
        <taxon>Rattus</taxon>
    </lineage>
</organism>